<keyword id="KW-1185">Reference proteome</keyword>
<keyword id="KW-0678">Repressor</keyword>
<keyword id="KW-0687">Ribonucleoprotein</keyword>
<keyword id="KW-0689">Ribosomal protein</keyword>
<keyword id="KW-0694">RNA-binding</keyword>
<keyword id="KW-0699">rRNA-binding</keyword>
<keyword id="KW-0810">Translation regulation</keyword>
<keyword id="KW-0820">tRNA-binding</keyword>
<gene>
    <name evidence="1" type="primary">rplA</name>
    <name type="ordered locus">SSON_4157</name>
</gene>
<dbReference type="EMBL" id="CP000038">
    <property type="protein sequence ID" value="AAZ90662.1"/>
    <property type="molecule type" value="Genomic_DNA"/>
</dbReference>
<dbReference type="RefSeq" id="WP_001096684.1">
    <property type="nucleotide sequence ID" value="NC_007384.1"/>
</dbReference>
<dbReference type="SMR" id="Q3YV00"/>
<dbReference type="GeneID" id="93777910"/>
<dbReference type="KEGG" id="ssn:SSON_4157"/>
<dbReference type="HOGENOM" id="CLU_062853_0_0_6"/>
<dbReference type="Proteomes" id="UP000002529">
    <property type="component" value="Chromosome"/>
</dbReference>
<dbReference type="GO" id="GO:0022625">
    <property type="term" value="C:cytosolic large ribosomal subunit"/>
    <property type="evidence" value="ECO:0007669"/>
    <property type="project" value="TreeGrafter"/>
</dbReference>
<dbReference type="GO" id="GO:0019843">
    <property type="term" value="F:rRNA binding"/>
    <property type="evidence" value="ECO:0007669"/>
    <property type="project" value="UniProtKB-UniRule"/>
</dbReference>
<dbReference type="GO" id="GO:0003735">
    <property type="term" value="F:structural constituent of ribosome"/>
    <property type="evidence" value="ECO:0007669"/>
    <property type="project" value="InterPro"/>
</dbReference>
<dbReference type="GO" id="GO:0000049">
    <property type="term" value="F:tRNA binding"/>
    <property type="evidence" value="ECO:0007669"/>
    <property type="project" value="UniProtKB-KW"/>
</dbReference>
<dbReference type="GO" id="GO:0006417">
    <property type="term" value="P:regulation of translation"/>
    <property type="evidence" value="ECO:0007669"/>
    <property type="project" value="UniProtKB-KW"/>
</dbReference>
<dbReference type="GO" id="GO:0006412">
    <property type="term" value="P:translation"/>
    <property type="evidence" value="ECO:0007669"/>
    <property type="project" value="UniProtKB-UniRule"/>
</dbReference>
<dbReference type="CDD" id="cd00403">
    <property type="entry name" value="Ribosomal_L1"/>
    <property type="match status" value="1"/>
</dbReference>
<dbReference type="FunFam" id="3.40.50.790:FF:000001">
    <property type="entry name" value="50S ribosomal protein L1"/>
    <property type="match status" value="1"/>
</dbReference>
<dbReference type="Gene3D" id="3.30.190.20">
    <property type="match status" value="1"/>
</dbReference>
<dbReference type="Gene3D" id="3.40.50.790">
    <property type="match status" value="1"/>
</dbReference>
<dbReference type="HAMAP" id="MF_01318_B">
    <property type="entry name" value="Ribosomal_uL1_B"/>
    <property type="match status" value="1"/>
</dbReference>
<dbReference type="InterPro" id="IPR005878">
    <property type="entry name" value="Ribosom_uL1_bac-type"/>
</dbReference>
<dbReference type="InterPro" id="IPR002143">
    <property type="entry name" value="Ribosomal_uL1"/>
</dbReference>
<dbReference type="InterPro" id="IPR023674">
    <property type="entry name" value="Ribosomal_uL1-like"/>
</dbReference>
<dbReference type="InterPro" id="IPR028364">
    <property type="entry name" value="Ribosomal_uL1/biogenesis"/>
</dbReference>
<dbReference type="InterPro" id="IPR016095">
    <property type="entry name" value="Ribosomal_uL1_3-a/b-sand"/>
</dbReference>
<dbReference type="InterPro" id="IPR023673">
    <property type="entry name" value="Ribosomal_uL1_CS"/>
</dbReference>
<dbReference type="NCBIfam" id="TIGR01169">
    <property type="entry name" value="rplA_bact"/>
    <property type="match status" value="1"/>
</dbReference>
<dbReference type="PANTHER" id="PTHR36427">
    <property type="entry name" value="54S RIBOSOMAL PROTEIN L1, MITOCHONDRIAL"/>
    <property type="match status" value="1"/>
</dbReference>
<dbReference type="PANTHER" id="PTHR36427:SF3">
    <property type="entry name" value="LARGE RIBOSOMAL SUBUNIT PROTEIN UL1M"/>
    <property type="match status" value="1"/>
</dbReference>
<dbReference type="Pfam" id="PF00687">
    <property type="entry name" value="Ribosomal_L1"/>
    <property type="match status" value="1"/>
</dbReference>
<dbReference type="PIRSF" id="PIRSF002155">
    <property type="entry name" value="Ribosomal_L1"/>
    <property type="match status" value="1"/>
</dbReference>
<dbReference type="SUPFAM" id="SSF56808">
    <property type="entry name" value="Ribosomal protein L1"/>
    <property type="match status" value="1"/>
</dbReference>
<dbReference type="PROSITE" id="PS01199">
    <property type="entry name" value="RIBOSOMAL_L1"/>
    <property type="match status" value="1"/>
</dbReference>
<reference key="1">
    <citation type="journal article" date="2005" name="Nucleic Acids Res.">
        <title>Genome dynamics and diversity of Shigella species, the etiologic agents of bacillary dysentery.</title>
        <authorList>
            <person name="Yang F."/>
            <person name="Yang J."/>
            <person name="Zhang X."/>
            <person name="Chen L."/>
            <person name="Jiang Y."/>
            <person name="Yan Y."/>
            <person name="Tang X."/>
            <person name="Wang J."/>
            <person name="Xiong Z."/>
            <person name="Dong J."/>
            <person name="Xue Y."/>
            <person name="Zhu Y."/>
            <person name="Xu X."/>
            <person name="Sun L."/>
            <person name="Chen S."/>
            <person name="Nie H."/>
            <person name="Peng J."/>
            <person name="Xu J."/>
            <person name="Wang Y."/>
            <person name="Yuan Z."/>
            <person name="Wen Y."/>
            <person name="Yao Z."/>
            <person name="Shen Y."/>
            <person name="Qiang B."/>
            <person name="Hou Y."/>
            <person name="Yu J."/>
            <person name="Jin Q."/>
        </authorList>
    </citation>
    <scope>NUCLEOTIDE SEQUENCE [LARGE SCALE GENOMIC DNA]</scope>
    <source>
        <strain>Ss046</strain>
    </source>
</reference>
<accession>Q3YV00</accession>
<evidence type="ECO:0000255" key="1">
    <source>
        <dbReference type="HAMAP-Rule" id="MF_01318"/>
    </source>
</evidence>
<evidence type="ECO:0000305" key="2"/>
<sequence>MAKLTKRMRVIREKVDATKQYDINEAIALLKELATAKFVESVDVAVNLGIDARKSDQNVRGATVLPHGTGRSVRVAVFTQGANAEAAKAAGAELVGMEDLADQIKKGEMNFDVVIASPDAMRVVGQLGQVLGPRGLMPNPKVGTVTPNVAEAVKNAKAGQVRYRNDKNGIIHTTIGKVDFDADKLKENLEALLVALKKAKPTQAKGVYIKKVSISTTMGAGVAVDQAGLSASVN</sequence>
<organism>
    <name type="scientific">Shigella sonnei (strain Ss046)</name>
    <dbReference type="NCBI Taxonomy" id="300269"/>
    <lineage>
        <taxon>Bacteria</taxon>
        <taxon>Pseudomonadati</taxon>
        <taxon>Pseudomonadota</taxon>
        <taxon>Gammaproteobacteria</taxon>
        <taxon>Enterobacterales</taxon>
        <taxon>Enterobacteriaceae</taxon>
        <taxon>Shigella</taxon>
    </lineage>
</organism>
<comment type="function">
    <text evidence="1">Binds directly to 23S rRNA. The L1 stalk is quite mobile in the ribosome, and is involved in E site tRNA release.</text>
</comment>
<comment type="function">
    <text evidence="1">Protein L1 is also a translational repressor protein, it controls the translation of the L11 operon by binding to its mRNA.</text>
</comment>
<comment type="subunit">
    <text evidence="1">Part of the 50S ribosomal subunit.</text>
</comment>
<comment type="similarity">
    <text evidence="1">Belongs to the universal ribosomal protein uL1 family.</text>
</comment>
<proteinExistence type="inferred from homology"/>
<name>RL1_SHISS</name>
<protein>
    <recommendedName>
        <fullName evidence="1">Large ribosomal subunit protein uL1</fullName>
    </recommendedName>
    <alternativeName>
        <fullName evidence="2">50S ribosomal protein L1</fullName>
    </alternativeName>
</protein>
<feature type="chain" id="PRO_0000230639" description="Large ribosomal subunit protein uL1">
    <location>
        <begin position="1"/>
        <end position="234"/>
    </location>
</feature>